<sequence>MRSVPEDFTTLISDLETFLTDVLKGENLSKKAKEKKDAFIKRIKDVKTSYAQEFKDRRDEEFPEPDEADTNDGGSLHSEQTDRDDENAYDGVQQSPPVAAQDLQAVLKSGYLEKRRKDHSFFGNEWQKRWCALNNSIFYYYGSEKDKQQKGEFNIVGYTVKMNNTLRKDAKRDCCFEVSAPDKRVYQFCAASEKEAKEWVEHIDFLIKDLGGIIPEDEEEYDDCLSMSQSEVAILPDDDIYEELPEEDVPQPSKPKVTLVNKPPPPATPVTAAVNKSTDYANYFQGLWDCIGDQPDELSFKRGDTIYILSKEYDMFGWWVGEMKGVIGIVPKEYLLELYVL</sequence>
<keyword id="KW-0075">B-cell activation</keyword>
<keyword id="KW-0963">Cytoplasm</keyword>
<keyword id="KW-0597">Phosphoprotein</keyword>
<keyword id="KW-1185">Reference proteome</keyword>
<keyword id="KW-0728">SH3 domain</keyword>
<dbReference type="EMBL" id="BC057253">
    <property type="protein sequence ID" value="AAH57253.1"/>
    <property type="molecule type" value="mRNA"/>
</dbReference>
<dbReference type="RefSeq" id="NP_956922.1">
    <property type="nucleotide sequence ID" value="NM_200628.1"/>
</dbReference>
<dbReference type="RefSeq" id="XP_068070010.1">
    <property type="nucleotide sequence ID" value="XM_068213909.1"/>
</dbReference>
<dbReference type="SMR" id="Q6PG29"/>
<dbReference type="FunCoup" id="Q6PG29">
    <property type="interactions" value="1121"/>
</dbReference>
<dbReference type="STRING" id="7955.ENSDARP00000052659"/>
<dbReference type="PaxDb" id="7955-ENSDARP00000052659"/>
<dbReference type="Ensembl" id="ENSDART00000052660">
    <property type="protein sequence ID" value="ENSDARP00000052659"/>
    <property type="gene ID" value="ENSDARG00000000906"/>
</dbReference>
<dbReference type="GeneID" id="368564"/>
<dbReference type="KEGG" id="dre:368564"/>
<dbReference type="AGR" id="ZFIN:ZDB-GENE-030616-438"/>
<dbReference type="CTD" id="8935"/>
<dbReference type="ZFIN" id="ZDB-GENE-030616-438">
    <property type="gene designation" value="skap2"/>
</dbReference>
<dbReference type="eggNOG" id="ENOG502QVFD">
    <property type="taxonomic scope" value="Eukaryota"/>
</dbReference>
<dbReference type="HOGENOM" id="CLU_062032_0_0_1"/>
<dbReference type="InParanoid" id="Q6PG29"/>
<dbReference type="OMA" id="ASDRCDK"/>
<dbReference type="OrthoDB" id="243840at2759"/>
<dbReference type="PhylomeDB" id="Q6PG29"/>
<dbReference type="TreeFam" id="TF331055"/>
<dbReference type="PRO" id="PR:Q6PG29"/>
<dbReference type="Proteomes" id="UP000000437">
    <property type="component" value="Chromosome 16"/>
</dbReference>
<dbReference type="Bgee" id="ENSDARG00000000906">
    <property type="expression patterns" value="Expressed in granulocyte and 20 other cell types or tissues"/>
</dbReference>
<dbReference type="ExpressionAtlas" id="Q6PG29">
    <property type="expression patterns" value="baseline"/>
</dbReference>
<dbReference type="GO" id="GO:0005737">
    <property type="term" value="C:cytoplasm"/>
    <property type="evidence" value="ECO:0000318"/>
    <property type="project" value="GO_Central"/>
</dbReference>
<dbReference type="GO" id="GO:0005886">
    <property type="term" value="C:plasma membrane"/>
    <property type="evidence" value="ECO:0000318"/>
    <property type="project" value="GO_Central"/>
</dbReference>
<dbReference type="GO" id="GO:0042113">
    <property type="term" value="P:B cell activation"/>
    <property type="evidence" value="ECO:0007669"/>
    <property type="project" value="UniProtKB-KW"/>
</dbReference>
<dbReference type="CDD" id="cd13381">
    <property type="entry name" value="PH_Skap-hom_Skap2"/>
    <property type="match status" value="1"/>
</dbReference>
<dbReference type="CDD" id="cd12045">
    <property type="entry name" value="SH3_SKAP2"/>
    <property type="match status" value="1"/>
</dbReference>
<dbReference type="FunFam" id="2.30.29.30:FF:000194">
    <property type="entry name" value="Putative src kinase-associated phosphoprotein 2"/>
    <property type="match status" value="1"/>
</dbReference>
<dbReference type="FunFam" id="2.30.30.40:FF:000097">
    <property type="entry name" value="Putative src kinase-associated phosphoprotein 2"/>
    <property type="match status" value="1"/>
</dbReference>
<dbReference type="Gene3D" id="6.10.250.220">
    <property type="match status" value="1"/>
</dbReference>
<dbReference type="Gene3D" id="2.30.29.30">
    <property type="entry name" value="Pleckstrin-homology domain (PH domain)/Phosphotyrosine-binding domain (PTB)"/>
    <property type="match status" value="1"/>
</dbReference>
<dbReference type="Gene3D" id="2.30.30.40">
    <property type="entry name" value="SH3 Domains"/>
    <property type="match status" value="1"/>
</dbReference>
<dbReference type="InterPro" id="IPR011993">
    <property type="entry name" value="PH-like_dom_sf"/>
</dbReference>
<dbReference type="InterPro" id="IPR001849">
    <property type="entry name" value="PH_domain"/>
</dbReference>
<dbReference type="InterPro" id="IPR036028">
    <property type="entry name" value="SH3-like_dom_sf"/>
</dbReference>
<dbReference type="InterPro" id="IPR001452">
    <property type="entry name" value="SH3_domain"/>
</dbReference>
<dbReference type="InterPro" id="IPR037781">
    <property type="entry name" value="SKAP_fam"/>
</dbReference>
<dbReference type="PANTHER" id="PTHR15129:SF2">
    <property type="entry name" value="SRC KINASE-ASSOCIATED PHOSPHOPROTEIN 2"/>
    <property type="match status" value="1"/>
</dbReference>
<dbReference type="PANTHER" id="PTHR15129">
    <property type="entry name" value="SRC-ASSOCIATED ADAPTOR PROTEIN"/>
    <property type="match status" value="1"/>
</dbReference>
<dbReference type="Pfam" id="PF00169">
    <property type="entry name" value="PH"/>
    <property type="match status" value="1"/>
</dbReference>
<dbReference type="Pfam" id="PF00018">
    <property type="entry name" value="SH3_1"/>
    <property type="match status" value="1"/>
</dbReference>
<dbReference type="PRINTS" id="PR00452">
    <property type="entry name" value="SH3DOMAIN"/>
</dbReference>
<dbReference type="SMART" id="SM00233">
    <property type="entry name" value="PH"/>
    <property type="match status" value="1"/>
</dbReference>
<dbReference type="SMART" id="SM00326">
    <property type="entry name" value="SH3"/>
    <property type="match status" value="1"/>
</dbReference>
<dbReference type="SUPFAM" id="SSF50729">
    <property type="entry name" value="PH domain-like"/>
    <property type="match status" value="1"/>
</dbReference>
<dbReference type="SUPFAM" id="SSF50044">
    <property type="entry name" value="SH3-domain"/>
    <property type="match status" value="1"/>
</dbReference>
<dbReference type="PROSITE" id="PS50003">
    <property type="entry name" value="PH_DOMAIN"/>
    <property type="match status" value="1"/>
</dbReference>
<dbReference type="PROSITE" id="PS50002">
    <property type="entry name" value="SH3"/>
    <property type="match status" value="1"/>
</dbReference>
<feature type="chain" id="PRO_0000270183" description="Src kinase-associated phosphoprotein 2">
    <location>
        <begin position="1"/>
        <end position="341"/>
    </location>
</feature>
<feature type="domain" description="PH" evidence="2">
    <location>
        <begin position="105"/>
        <end position="208"/>
    </location>
</feature>
<feature type="domain" description="SH3" evidence="3">
    <location>
        <begin position="279"/>
        <end position="340"/>
    </location>
</feature>
<feature type="region of interest" description="Disordered" evidence="4">
    <location>
        <begin position="54"/>
        <end position="95"/>
    </location>
</feature>
<feature type="region of interest" description="Disordered" evidence="4">
    <location>
        <begin position="246"/>
        <end position="265"/>
    </location>
</feature>
<feature type="compositionally biased region" description="Acidic residues" evidence="4">
    <location>
        <begin position="61"/>
        <end position="70"/>
    </location>
</feature>
<gene>
    <name type="primary">skap2</name>
    <name type="synonym">scap2</name>
    <name type="ORF">zgc:65975</name>
</gene>
<evidence type="ECO:0000250" key="1"/>
<evidence type="ECO:0000255" key="2">
    <source>
        <dbReference type="PROSITE-ProRule" id="PRU00145"/>
    </source>
</evidence>
<evidence type="ECO:0000255" key="3">
    <source>
        <dbReference type="PROSITE-ProRule" id="PRU00192"/>
    </source>
</evidence>
<evidence type="ECO:0000256" key="4">
    <source>
        <dbReference type="SAM" id="MobiDB-lite"/>
    </source>
</evidence>
<evidence type="ECO:0000305" key="5"/>
<comment type="function">
    <text evidence="1">May be involved in B-cell and macrophage adhesion processes. May play a role in src signaling pathway (By similarity).</text>
</comment>
<comment type="subcellular location">
    <subcellularLocation>
        <location evidence="1">Cytoplasm</location>
    </subcellularLocation>
</comment>
<comment type="PTM">
    <text evidence="1">Phosphorylated on tyrosines.</text>
</comment>
<comment type="similarity">
    <text evidence="5">Belongs to the SKAP family.</text>
</comment>
<protein>
    <recommendedName>
        <fullName>Src kinase-associated phosphoprotein 2</fullName>
    </recommendedName>
    <alternativeName>
        <fullName>Src family-associated phosphoprotein 2</fullName>
    </alternativeName>
</protein>
<reference key="1">
    <citation type="submission" date="2003-08" db="EMBL/GenBank/DDBJ databases">
        <authorList>
            <consortium name="NIH - Zebrafish Gene Collection (ZGC) project"/>
        </authorList>
    </citation>
    <scope>NUCLEOTIDE SEQUENCE [LARGE SCALE MRNA]</scope>
    <source>
        <tissue>Kidney</tissue>
    </source>
</reference>
<name>SKAP2_DANRE</name>
<organism>
    <name type="scientific">Danio rerio</name>
    <name type="common">Zebrafish</name>
    <name type="synonym">Brachydanio rerio</name>
    <dbReference type="NCBI Taxonomy" id="7955"/>
    <lineage>
        <taxon>Eukaryota</taxon>
        <taxon>Metazoa</taxon>
        <taxon>Chordata</taxon>
        <taxon>Craniata</taxon>
        <taxon>Vertebrata</taxon>
        <taxon>Euteleostomi</taxon>
        <taxon>Actinopterygii</taxon>
        <taxon>Neopterygii</taxon>
        <taxon>Teleostei</taxon>
        <taxon>Ostariophysi</taxon>
        <taxon>Cypriniformes</taxon>
        <taxon>Danionidae</taxon>
        <taxon>Danioninae</taxon>
        <taxon>Danio</taxon>
    </lineage>
</organism>
<accession>Q6PG29</accession>
<proteinExistence type="evidence at transcript level"/>